<accession>Q9I0A2</accession>
<name>RL20_PSEAE</name>
<evidence type="ECO:0000255" key="1">
    <source>
        <dbReference type="HAMAP-Rule" id="MF_00382"/>
    </source>
</evidence>
<evidence type="ECO:0000305" key="2"/>
<proteinExistence type="evidence at protein level"/>
<keyword id="KW-0002">3D-structure</keyword>
<keyword id="KW-1185">Reference proteome</keyword>
<keyword id="KW-0687">Ribonucleoprotein</keyword>
<keyword id="KW-0689">Ribosomal protein</keyword>
<keyword id="KW-0694">RNA-binding</keyword>
<keyword id="KW-0699">rRNA-binding</keyword>
<protein>
    <recommendedName>
        <fullName evidence="1">Large ribosomal subunit protein bL20</fullName>
    </recommendedName>
    <alternativeName>
        <fullName evidence="2">50S ribosomal protein L20</fullName>
    </alternativeName>
</protein>
<dbReference type="EMBL" id="AE004091">
    <property type="protein sequence ID" value="AAG06129.1"/>
    <property type="molecule type" value="Genomic_DNA"/>
</dbReference>
<dbReference type="PIR" id="C83303">
    <property type="entry name" value="C83303"/>
</dbReference>
<dbReference type="RefSeq" id="NP_251431.1">
    <property type="nucleotide sequence ID" value="NC_002516.2"/>
</dbReference>
<dbReference type="RefSeq" id="WP_003099086.1">
    <property type="nucleotide sequence ID" value="NZ_QZGE01000011.1"/>
</dbReference>
<dbReference type="PDB" id="7UNR">
    <property type="method" value="EM"/>
    <property type="resolution" value="2.90 A"/>
    <property type="chains" value="S=1-118"/>
</dbReference>
<dbReference type="PDB" id="7UNU">
    <property type="method" value="EM"/>
    <property type="resolution" value="2.90 A"/>
    <property type="chains" value="S=1-118"/>
</dbReference>
<dbReference type="PDB" id="7UNV">
    <property type="method" value="EM"/>
    <property type="resolution" value="2.70 A"/>
    <property type="chains" value="S=1-118"/>
</dbReference>
<dbReference type="PDB" id="7UNW">
    <property type="method" value="EM"/>
    <property type="resolution" value="2.60 A"/>
    <property type="chains" value="S=1-118"/>
</dbReference>
<dbReference type="PDB" id="8CD1">
    <property type="method" value="EM"/>
    <property type="resolution" value="3.00 A"/>
    <property type="chains" value="Q=1-118"/>
</dbReference>
<dbReference type="PDB" id="8RWG">
    <property type="method" value="EM"/>
    <property type="resolution" value="2.46 A"/>
    <property type="chains" value="Q=1-118"/>
</dbReference>
<dbReference type="PDBsum" id="7UNR"/>
<dbReference type="PDBsum" id="7UNU"/>
<dbReference type="PDBsum" id="7UNV"/>
<dbReference type="PDBsum" id="7UNW"/>
<dbReference type="PDBsum" id="8CD1"/>
<dbReference type="PDBsum" id="8RWG"/>
<dbReference type="EMDB" id="EMD-16566"/>
<dbReference type="EMDB" id="EMD-19547"/>
<dbReference type="EMDB" id="EMD-26630"/>
<dbReference type="EMDB" id="EMD-26633"/>
<dbReference type="EMDB" id="EMD-26634"/>
<dbReference type="EMDB" id="EMD-26635"/>
<dbReference type="SMR" id="Q9I0A2"/>
<dbReference type="FunCoup" id="Q9I0A2">
    <property type="interactions" value="771"/>
</dbReference>
<dbReference type="STRING" id="208964.PA2741"/>
<dbReference type="PaxDb" id="208964-PA2741"/>
<dbReference type="DNASU" id="882982"/>
<dbReference type="GeneID" id="79913049"/>
<dbReference type="GeneID" id="882982"/>
<dbReference type="KEGG" id="pae:PA2741"/>
<dbReference type="PATRIC" id="fig|208964.12.peg.2866"/>
<dbReference type="PseudoCAP" id="PA2741"/>
<dbReference type="HOGENOM" id="CLU_123265_0_1_6"/>
<dbReference type="InParanoid" id="Q9I0A2"/>
<dbReference type="OrthoDB" id="9808966at2"/>
<dbReference type="PhylomeDB" id="Q9I0A2"/>
<dbReference type="BioCyc" id="PAER208964:G1FZ6-2780-MONOMER"/>
<dbReference type="PRO" id="PR:Q9I0A2"/>
<dbReference type="Proteomes" id="UP000002438">
    <property type="component" value="Chromosome"/>
</dbReference>
<dbReference type="GO" id="GO:0022625">
    <property type="term" value="C:cytosolic large ribosomal subunit"/>
    <property type="evidence" value="ECO:0000318"/>
    <property type="project" value="GO_Central"/>
</dbReference>
<dbReference type="GO" id="GO:0019843">
    <property type="term" value="F:rRNA binding"/>
    <property type="evidence" value="ECO:0007669"/>
    <property type="project" value="UniProtKB-UniRule"/>
</dbReference>
<dbReference type="GO" id="GO:0003735">
    <property type="term" value="F:structural constituent of ribosome"/>
    <property type="evidence" value="ECO:0000318"/>
    <property type="project" value="GO_Central"/>
</dbReference>
<dbReference type="GO" id="GO:0000027">
    <property type="term" value="P:ribosomal large subunit assembly"/>
    <property type="evidence" value="ECO:0007669"/>
    <property type="project" value="UniProtKB-UniRule"/>
</dbReference>
<dbReference type="GO" id="GO:0006412">
    <property type="term" value="P:translation"/>
    <property type="evidence" value="ECO:0007669"/>
    <property type="project" value="InterPro"/>
</dbReference>
<dbReference type="CDD" id="cd07026">
    <property type="entry name" value="Ribosomal_L20"/>
    <property type="match status" value="1"/>
</dbReference>
<dbReference type="FunFam" id="1.10.1900.20:FF:000001">
    <property type="entry name" value="50S ribosomal protein L20"/>
    <property type="match status" value="1"/>
</dbReference>
<dbReference type="Gene3D" id="6.10.160.10">
    <property type="match status" value="1"/>
</dbReference>
<dbReference type="Gene3D" id="1.10.1900.20">
    <property type="entry name" value="Ribosomal protein L20"/>
    <property type="match status" value="1"/>
</dbReference>
<dbReference type="HAMAP" id="MF_00382">
    <property type="entry name" value="Ribosomal_bL20"/>
    <property type="match status" value="1"/>
</dbReference>
<dbReference type="InterPro" id="IPR005813">
    <property type="entry name" value="Ribosomal_bL20"/>
</dbReference>
<dbReference type="InterPro" id="IPR049946">
    <property type="entry name" value="RIBOSOMAL_L20_CS"/>
</dbReference>
<dbReference type="InterPro" id="IPR035566">
    <property type="entry name" value="Ribosomal_protein_bL20_C"/>
</dbReference>
<dbReference type="NCBIfam" id="TIGR01032">
    <property type="entry name" value="rplT_bact"/>
    <property type="match status" value="1"/>
</dbReference>
<dbReference type="PANTHER" id="PTHR10986">
    <property type="entry name" value="39S RIBOSOMAL PROTEIN L20"/>
    <property type="match status" value="1"/>
</dbReference>
<dbReference type="Pfam" id="PF00453">
    <property type="entry name" value="Ribosomal_L20"/>
    <property type="match status" value="1"/>
</dbReference>
<dbReference type="PRINTS" id="PR00062">
    <property type="entry name" value="RIBOSOMALL20"/>
</dbReference>
<dbReference type="SUPFAM" id="SSF74731">
    <property type="entry name" value="Ribosomal protein L20"/>
    <property type="match status" value="1"/>
</dbReference>
<dbReference type="PROSITE" id="PS00937">
    <property type="entry name" value="RIBOSOMAL_L20"/>
    <property type="match status" value="1"/>
</dbReference>
<feature type="chain" id="PRO_0000177206" description="Large ribosomal subunit protein bL20">
    <location>
        <begin position="1"/>
        <end position="118"/>
    </location>
</feature>
<comment type="function">
    <text evidence="1">Binds directly to 23S ribosomal RNA and is necessary for the in vitro assembly process of the 50S ribosomal subunit. It is not involved in the protein synthesizing functions of that subunit.</text>
</comment>
<comment type="similarity">
    <text evidence="1">Belongs to the bacterial ribosomal protein bL20 family.</text>
</comment>
<organism>
    <name type="scientific">Pseudomonas aeruginosa (strain ATCC 15692 / DSM 22644 / CIP 104116 / JCM 14847 / LMG 12228 / 1C / PRS 101 / PAO1)</name>
    <dbReference type="NCBI Taxonomy" id="208964"/>
    <lineage>
        <taxon>Bacteria</taxon>
        <taxon>Pseudomonadati</taxon>
        <taxon>Pseudomonadota</taxon>
        <taxon>Gammaproteobacteria</taxon>
        <taxon>Pseudomonadales</taxon>
        <taxon>Pseudomonadaceae</taxon>
        <taxon>Pseudomonas</taxon>
    </lineage>
</organism>
<reference key="1">
    <citation type="journal article" date="2000" name="Nature">
        <title>Complete genome sequence of Pseudomonas aeruginosa PAO1, an opportunistic pathogen.</title>
        <authorList>
            <person name="Stover C.K."/>
            <person name="Pham X.-Q.T."/>
            <person name="Erwin A.L."/>
            <person name="Mizoguchi S.D."/>
            <person name="Warrener P."/>
            <person name="Hickey M.J."/>
            <person name="Brinkman F.S.L."/>
            <person name="Hufnagle W.O."/>
            <person name="Kowalik D.J."/>
            <person name="Lagrou M."/>
            <person name="Garber R.L."/>
            <person name="Goltry L."/>
            <person name="Tolentino E."/>
            <person name="Westbrock-Wadman S."/>
            <person name="Yuan Y."/>
            <person name="Brody L.L."/>
            <person name="Coulter S.N."/>
            <person name="Folger K.R."/>
            <person name="Kas A."/>
            <person name="Larbig K."/>
            <person name="Lim R.M."/>
            <person name="Smith K.A."/>
            <person name="Spencer D.H."/>
            <person name="Wong G.K.-S."/>
            <person name="Wu Z."/>
            <person name="Paulsen I.T."/>
            <person name="Reizer J."/>
            <person name="Saier M.H. Jr."/>
            <person name="Hancock R.E.W."/>
            <person name="Lory S."/>
            <person name="Olson M.V."/>
        </authorList>
    </citation>
    <scope>NUCLEOTIDE SEQUENCE [LARGE SCALE GENOMIC DNA]</scope>
    <source>
        <strain>ATCC 15692 / DSM 22644 / CIP 104116 / JCM 14847 / LMG 12228 / 1C / PRS 101 / PAO1</strain>
    </source>
</reference>
<sequence>MARVKRGVIARRRHKKILKLAKGYYGARSRVFRVAKQAVIKAGQYAYRDRRQRKRQFRALWIARINAGARQNGLSYSRLIAGLKKAAIEIDRKVLADLAVNEKAAFTAIVEKAKASLA</sequence>
<gene>
    <name evidence="1" type="primary">rplT</name>
    <name type="ordered locus">PA2741</name>
</gene>